<feature type="chain" id="PRO_0000326971" description="Protoheme IX farnesyltransferase">
    <location>
        <begin position="1"/>
        <end position="298"/>
    </location>
</feature>
<feature type="transmembrane region" description="Helical" evidence="1">
    <location>
        <begin position="16"/>
        <end position="36"/>
    </location>
</feature>
<feature type="transmembrane region" description="Helical" evidence="1">
    <location>
        <begin position="45"/>
        <end position="65"/>
    </location>
</feature>
<feature type="transmembrane region" description="Helical" evidence="1">
    <location>
        <begin position="97"/>
        <end position="117"/>
    </location>
</feature>
<feature type="transmembrane region" description="Helical" evidence="1">
    <location>
        <begin position="141"/>
        <end position="161"/>
    </location>
</feature>
<feature type="transmembrane region" description="Helical" evidence="1">
    <location>
        <begin position="172"/>
        <end position="192"/>
    </location>
</feature>
<feature type="transmembrane region" description="Helical" evidence="1">
    <location>
        <begin position="223"/>
        <end position="243"/>
    </location>
</feature>
<feature type="transmembrane region" description="Helical" evidence="1">
    <location>
        <begin position="244"/>
        <end position="264"/>
    </location>
</feature>
<feature type="transmembrane region" description="Helical" evidence="1">
    <location>
        <begin position="277"/>
        <end position="297"/>
    </location>
</feature>
<evidence type="ECO:0000255" key="1">
    <source>
        <dbReference type="HAMAP-Rule" id="MF_00154"/>
    </source>
</evidence>
<evidence type="ECO:0000305" key="2"/>
<name>CYOE_XANC8</name>
<organism>
    <name type="scientific">Xanthomonas campestris pv. campestris (strain 8004)</name>
    <dbReference type="NCBI Taxonomy" id="314565"/>
    <lineage>
        <taxon>Bacteria</taxon>
        <taxon>Pseudomonadati</taxon>
        <taxon>Pseudomonadota</taxon>
        <taxon>Gammaproteobacteria</taxon>
        <taxon>Lysobacterales</taxon>
        <taxon>Lysobacteraceae</taxon>
        <taxon>Xanthomonas</taxon>
    </lineage>
</organism>
<sequence length="298" mass="32587">MAVSARDYWDLTKPKVVALIVFTALVGMFLAIPGMPTWLQVRTGALGFLGIWLAASAAAAINQLLDAKIDAQMARTSWRPLVVGKVRPAQVLAFASVLIVISMTILVVWVNVITAVLTFASLIGYAVIYTVYLKRATSQNIVIGGLAGATPPMLGWAAVTGLPTSADWINASLLVLIIFIWTPPHFWALAIFRRADYAKAAIPMLPVTHGVPHTRKQILVYTVLLAIVTLLPVAVGMSGVFYLGGAVVLNAVFLWYAWRMLDPPDELFSMKMFGYSVVYLMALFAFLMVDHLLLPWVR</sequence>
<protein>
    <recommendedName>
        <fullName evidence="1">Protoheme IX farnesyltransferase</fullName>
        <ecNumber evidence="1">2.5.1.141</ecNumber>
    </recommendedName>
    <alternativeName>
        <fullName evidence="1">Heme B farnesyltransferase</fullName>
    </alternativeName>
    <alternativeName>
        <fullName evidence="1">Heme O synthase</fullName>
    </alternativeName>
</protein>
<comment type="function">
    <text evidence="1">Converts heme B (protoheme IX) to heme O by substitution of the vinyl group on carbon 2 of heme B porphyrin ring with a hydroxyethyl farnesyl side group.</text>
</comment>
<comment type="catalytic activity">
    <reaction evidence="1">
        <text>heme b + (2E,6E)-farnesyl diphosphate + H2O = Fe(II)-heme o + diphosphate</text>
        <dbReference type="Rhea" id="RHEA:28070"/>
        <dbReference type="ChEBI" id="CHEBI:15377"/>
        <dbReference type="ChEBI" id="CHEBI:33019"/>
        <dbReference type="ChEBI" id="CHEBI:60344"/>
        <dbReference type="ChEBI" id="CHEBI:60530"/>
        <dbReference type="ChEBI" id="CHEBI:175763"/>
        <dbReference type="EC" id="2.5.1.141"/>
    </reaction>
</comment>
<comment type="pathway">
    <text evidence="1">Porphyrin-containing compound metabolism; heme O biosynthesis; heme O from protoheme: step 1/1.</text>
</comment>
<comment type="subcellular location">
    <subcellularLocation>
        <location evidence="1">Cell inner membrane</location>
        <topology evidence="1">Multi-pass membrane protein</topology>
    </subcellularLocation>
</comment>
<comment type="miscellaneous">
    <text evidence="1">Carbon 2 of the heme B porphyrin ring is defined according to the Fischer nomenclature.</text>
</comment>
<comment type="similarity">
    <text evidence="1">Belongs to the UbiA prenyltransferase family. Protoheme IX farnesyltransferase subfamily.</text>
</comment>
<comment type="sequence caution" evidence="2">
    <conflict type="erroneous initiation">
        <sequence resource="EMBL-CDS" id="AAY50936"/>
    </conflict>
</comment>
<dbReference type="EC" id="2.5.1.141" evidence="1"/>
<dbReference type="EMBL" id="CP000050">
    <property type="protein sequence ID" value="AAY50936.1"/>
    <property type="status" value="ALT_INIT"/>
    <property type="molecule type" value="Genomic_DNA"/>
</dbReference>
<dbReference type="RefSeq" id="WP_014506322.1">
    <property type="nucleotide sequence ID" value="NZ_CP155948.1"/>
</dbReference>
<dbReference type="SMR" id="Q4UPT7"/>
<dbReference type="GeneID" id="58015113"/>
<dbReference type="KEGG" id="xcb:XC_3896"/>
<dbReference type="HOGENOM" id="CLU_029631_0_2_6"/>
<dbReference type="UniPathway" id="UPA00834">
    <property type="reaction ID" value="UER00712"/>
</dbReference>
<dbReference type="Proteomes" id="UP000000420">
    <property type="component" value="Chromosome"/>
</dbReference>
<dbReference type="GO" id="GO:0005886">
    <property type="term" value="C:plasma membrane"/>
    <property type="evidence" value="ECO:0007669"/>
    <property type="project" value="UniProtKB-SubCell"/>
</dbReference>
<dbReference type="GO" id="GO:0008495">
    <property type="term" value="F:protoheme IX farnesyltransferase activity"/>
    <property type="evidence" value="ECO:0007669"/>
    <property type="project" value="UniProtKB-UniRule"/>
</dbReference>
<dbReference type="GO" id="GO:0048034">
    <property type="term" value="P:heme O biosynthetic process"/>
    <property type="evidence" value="ECO:0007669"/>
    <property type="project" value="UniProtKB-UniRule"/>
</dbReference>
<dbReference type="CDD" id="cd13957">
    <property type="entry name" value="PT_UbiA_Cox10"/>
    <property type="match status" value="1"/>
</dbReference>
<dbReference type="FunFam" id="1.10.357.140:FF:000001">
    <property type="entry name" value="Protoheme IX farnesyltransferase"/>
    <property type="match status" value="1"/>
</dbReference>
<dbReference type="Gene3D" id="1.10.357.140">
    <property type="entry name" value="UbiA prenyltransferase"/>
    <property type="match status" value="1"/>
</dbReference>
<dbReference type="HAMAP" id="MF_00154">
    <property type="entry name" value="CyoE_CtaB"/>
    <property type="match status" value="1"/>
</dbReference>
<dbReference type="InterPro" id="IPR006369">
    <property type="entry name" value="Protohaem_IX_farnesylTrfase"/>
</dbReference>
<dbReference type="InterPro" id="IPR000537">
    <property type="entry name" value="UbiA_prenyltransferase"/>
</dbReference>
<dbReference type="InterPro" id="IPR030470">
    <property type="entry name" value="UbiA_prenylTrfase_CS"/>
</dbReference>
<dbReference type="InterPro" id="IPR044878">
    <property type="entry name" value="UbiA_sf"/>
</dbReference>
<dbReference type="NCBIfam" id="TIGR01473">
    <property type="entry name" value="cyoE_ctaB"/>
    <property type="match status" value="1"/>
</dbReference>
<dbReference type="NCBIfam" id="NF003349">
    <property type="entry name" value="PRK04375.1-2"/>
    <property type="match status" value="1"/>
</dbReference>
<dbReference type="PANTHER" id="PTHR43448:SF7">
    <property type="entry name" value="4-HYDROXYBENZOATE SOLANESYLTRANSFERASE"/>
    <property type="match status" value="1"/>
</dbReference>
<dbReference type="PANTHER" id="PTHR43448">
    <property type="entry name" value="PROTOHEME IX FARNESYLTRANSFERASE, MITOCHONDRIAL"/>
    <property type="match status" value="1"/>
</dbReference>
<dbReference type="Pfam" id="PF01040">
    <property type="entry name" value="UbiA"/>
    <property type="match status" value="1"/>
</dbReference>
<dbReference type="PROSITE" id="PS00943">
    <property type="entry name" value="UBIA"/>
    <property type="match status" value="1"/>
</dbReference>
<gene>
    <name evidence="1" type="primary">cyoE</name>
    <name type="ordered locus">XC_3896</name>
</gene>
<reference key="1">
    <citation type="journal article" date="2005" name="Genome Res.">
        <title>Comparative and functional genomic analyses of the pathogenicity of phytopathogen Xanthomonas campestris pv. campestris.</title>
        <authorList>
            <person name="Qian W."/>
            <person name="Jia Y."/>
            <person name="Ren S.-X."/>
            <person name="He Y.-Q."/>
            <person name="Feng J.-X."/>
            <person name="Lu L.-F."/>
            <person name="Sun Q."/>
            <person name="Ying G."/>
            <person name="Tang D.-J."/>
            <person name="Tang H."/>
            <person name="Wu W."/>
            <person name="Hao P."/>
            <person name="Wang L."/>
            <person name="Jiang B.-L."/>
            <person name="Zeng S."/>
            <person name="Gu W.-Y."/>
            <person name="Lu G."/>
            <person name="Rong L."/>
            <person name="Tian Y."/>
            <person name="Yao Z."/>
            <person name="Fu G."/>
            <person name="Chen B."/>
            <person name="Fang R."/>
            <person name="Qiang B."/>
            <person name="Chen Z."/>
            <person name="Zhao G.-P."/>
            <person name="Tang J.-L."/>
            <person name="He C."/>
        </authorList>
    </citation>
    <scope>NUCLEOTIDE SEQUENCE [LARGE SCALE GENOMIC DNA]</scope>
    <source>
        <strain>8004</strain>
    </source>
</reference>
<accession>Q4UPT7</accession>
<proteinExistence type="inferred from homology"/>
<keyword id="KW-0997">Cell inner membrane</keyword>
<keyword id="KW-1003">Cell membrane</keyword>
<keyword id="KW-0350">Heme biosynthesis</keyword>
<keyword id="KW-0472">Membrane</keyword>
<keyword id="KW-0808">Transferase</keyword>
<keyword id="KW-0812">Transmembrane</keyword>
<keyword id="KW-1133">Transmembrane helix</keyword>